<reference key="1">
    <citation type="journal article" date="2000" name="Nucleic Acids Res.">
        <title>Complete genome sequence of the alkaliphilic bacterium Bacillus halodurans and genomic sequence comparison with Bacillus subtilis.</title>
        <authorList>
            <person name="Takami H."/>
            <person name="Nakasone K."/>
            <person name="Takaki Y."/>
            <person name="Maeno G."/>
            <person name="Sasaki R."/>
            <person name="Masui N."/>
            <person name="Fuji F."/>
            <person name="Hirama C."/>
            <person name="Nakamura Y."/>
            <person name="Ogasawara N."/>
            <person name="Kuhara S."/>
            <person name="Horikoshi K."/>
        </authorList>
    </citation>
    <scope>NUCLEOTIDE SEQUENCE [LARGE SCALE GENOMIC DNA]</scope>
    <source>
        <strain>ATCC BAA-125 / DSM 18197 / FERM 7344 / JCM 9153 / C-125</strain>
    </source>
</reference>
<evidence type="ECO:0000255" key="1">
    <source>
        <dbReference type="HAMAP-Rule" id="MF_01442"/>
    </source>
</evidence>
<evidence type="ECO:0000305" key="2"/>
<keyword id="KW-0349">Heme</keyword>
<keyword id="KW-0350">Heme biosynthesis</keyword>
<keyword id="KW-0408">Iron</keyword>
<keyword id="KW-0479">Metal-binding</keyword>
<keyword id="KW-0560">Oxidoreductase</keyword>
<keyword id="KW-1185">Reference proteome</keyword>
<feature type="chain" id="PRO_0000294034" description="Coproheme decarboxylase">
    <location>
        <begin position="1"/>
        <end position="249"/>
    </location>
</feature>
<feature type="active site" evidence="1">
    <location>
        <position position="145"/>
    </location>
</feature>
<feature type="binding site" evidence="1">
    <location>
        <position position="131"/>
    </location>
    <ligand>
        <name>Fe-coproporphyrin III</name>
        <dbReference type="ChEBI" id="CHEBI:68438"/>
    </ligand>
</feature>
<feature type="binding site" evidence="1">
    <location>
        <begin position="145"/>
        <end position="149"/>
    </location>
    <ligand>
        <name>Fe-coproporphyrin III</name>
        <dbReference type="ChEBI" id="CHEBI:68438"/>
    </ligand>
</feature>
<feature type="binding site" description="axial binding residue" evidence="1">
    <location>
        <position position="172"/>
    </location>
    <ligand>
        <name>Fe-coproporphyrin III</name>
        <dbReference type="ChEBI" id="CHEBI:68438"/>
    </ligand>
    <ligandPart>
        <name>Fe</name>
        <dbReference type="ChEBI" id="CHEBI:18248"/>
    </ligandPart>
</feature>
<feature type="binding site" evidence="1">
    <location>
        <position position="185"/>
    </location>
    <ligand>
        <name>Fe-coproporphyrin III</name>
        <dbReference type="ChEBI" id="CHEBI:68438"/>
    </ligand>
</feature>
<feature type="binding site" evidence="1">
    <location>
        <position position="223"/>
    </location>
    <ligand>
        <name>Fe-coproporphyrin III</name>
        <dbReference type="ChEBI" id="CHEBI:68438"/>
    </ligand>
</feature>
<accession>Q9K6A4</accession>
<organism>
    <name type="scientific">Halalkalibacterium halodurans (strain ATCC BAA-125 / DSM 18197 / FERM 7344 / JCM 9153 / C-125)</name>
    <name type="common">Bacillus halodurans</name>
    <dbReference type="NCBI Taxonomy" id="272558"/>
    <lineage>
        <taxon>Bacteria</taxon>
        <taxon>Bacillati</taxon>
        <taxon>Bacillota</taxon>
        <taxon>Bacilli</taxon>
        <taxon>Bacillales</taxon>
        <taxon>Bacillaceae</taxon>
        <taxon>Halalkalibacterium (ex Joshi et al. 2022)</taxon>
    </lineage>
</organism>
<protein>
    <recommendedName>
        <fullName evidence="1">Coproheme decarboxylase</fullName>
        <ecNumber evidence="1">1.3.98.5</ecNumber>
    </recommendedName>
    <alternativeName>
        <fullName evidence="1">Coproheme III oxidative decarboxylase</fullName>
    </alternativeName>
    <alternativeName>
        <fullName evidence="1">Hydrogen peroxide-dependent heme synthase</fullName>
    </alternativeName>
</protein>
<gene>
    <name evidence="1" type="primary">chdC</name>
    <name type="ordered locus">BH3825</name>
</gene>
<sequence length="249" mass="28942">MNEAAKTLDGWYCLHDFRTINWAELKTLSTEERQQIINEFLDLMEKWNDTEAQGEGSHAVYTIVGQKADVMLMILRPSMEELNEIETAFNKSRFAEFTVPAYSYVSVVELSNYMAGDSDDDPYQNPHVRARLYPQLPKAKHVCFYPMDKRRQGDDNWYMLPMDQRRELMKSHGMIGRSYAGKVKQIITGSVGFDDWEWGVTLFADDVLQFKKLVYEMRFDEVSARYGEFGSFFVGNLLTAEGIPSYFYV</sequence>
<name>CHDC_HALH5</name>
<comment type="function">
    <text evidence="1">Involved in coproporphyrin-dependent heme b biosynthesis. Catalyzes the decarboxylation of Fe-coproporphyrin III (coproheme) to heme b (protoheme IX), the last step of the pathway. The reaction occurs in a stepwise manner with a three-propionate intermediate.</text>
</comment>
<comment type="catalytic activity">
    <reaction evidence="1">
        <text>Fe-coproporphyrin III + 2 H2O2 + 2 H(+) = heme b + 2 CO2 + 4 H2O</text>
        <dbReference type="Rhea" id="RHEA:56516"/>
        <dbReference type="ChEBI" id="CHEBI:15377"/>
        <dbReference type="ChEBI" id="CHEBI:15378"/>
        <dbReference type="ChEBI" id="CHEBI:16240"/>
        <dbReference type="ChEBI" id="CHEBI:16526"/>
        <dbReference type="ChEBI" id="CHEBI:60344"/>
        <dbReference type="ChEBI" id="CHEBI:68438"/>
        <dbReference type="EC" id="1.3.98.5"/>
    </reaction>
    <physiologicalReaction direction="left-to-right" evidence="1">
        <dbReference type="Rhea" id="RHEA:56517"/>
    </physiologicalReaction>
</comment>
<comment type="catalytic activity">
    <reaction evidence="1">
        <text>Fe-coproporphyrin III + H2O2 + H(+) = harderoheme III + CO2 + 2 H2O</text>
        <dbReference type="Rhea" id="RHEA:57940"/>
        <dbReference type="ChEBI" id="CHEBI:15377"/>
        <dbReference type="ChEBI" id="CHEBI:15378"/>
        <dbReference type="ChEBI" id="CHEBI:16240"/>
        <dbReference type="ChEBI" id="CHEBI:16526"/>
        <dbReference type="ChEBI" id="CHEBI:68438"/>
        <dbReference type="ChEBI" id="CHEBI:142463"/>
    </reaction>
    <physiologicalReaction direction="left-to-right" evidence="1">
        <dbReference type="Rhea" id="RHEA:57941"/>
    </physiologicalReaction>
</comment>
<comment type="catalytic activity">
    <reaction evidence="1">
        <text>harderoheme III + H2O2 + H(+) = heme b + CO2 + 2 H2O</text>
        <dbReference type="Rhea" id="RHEA:57944"/>
        <dbReference type="ChEBI" id="CHEBI:15377"/>
        <dbReference type="ChEBI" id="CHEBI:15378"/>
        <dbReference type="ChEBI" id="CHEBI:16240"/>
        <dbReference type="ChEBI" id="CHEBI:16526"/>
        <dbReference type="ChEBI" id="CHEBI:60344"/>
        <dbReference type="ChEBI" id="CHEBI:142463"/>
    </reaction>
    <physiologicalReaction direction="left-to-right" evidence="1">
        <dbReference type="Rhea" id="RHEA:57945"/>
    </physiologicalReaction>
</comment>
<comment type="cofactor">
    <cofactor evidence="1">
        <name>Fe-coproporphyrin III</name>
        <dbReference type="ChEBI" id="CHEBI:68438"/>
    </cofactor>
    <text evidence="1">Fe-coproporphyrin III acts both as a substrate and a redox cofactor.</text>
</comment>
<comment type="pathway">
    <text evidence="1">Porphyrin-containing compound metabolism; protoheme biosynthesis.</text>
</comment>
<comment type="similarity">
    <text evidence="1">Belongs to the ChdC family. Type 1 subfamily.</text>
</comment>
<comment type="sequence caution" evidence="2">
    <conflict type="erroneous initiation">
        <sequence resource="EMBL-CDS" id="BAB07544"/>
    </conflict>
</comment>
<proteinExistence type="inferred from homology"/>
<dbReference type="EC" id="1.3.98.5" evidence="1"/>
<dbReference type="EMBL" id="BA000004">
    <property type="protein sequence ID" value="BAB07544.1"/>
    <property type="status" value="ALT_INIT"/>
    <property type="molecule type" value="Genomic_DNA"/>
</dbReference>
<dbReference type="PIR" id="A84128">
    <property type="entry name" value="A84128"/>
</dbReference>
<dbReference type="RefSeq" id="WP_010899950.1">
    <property type="nucleotide sequence ID" value="NC_002570.2"/>
</dbReference>
<dbReference type="SMR" id="Q9K6A4"/>
<dbReference type="STRING" id="272558.gene:10729738"/>
<dbReference type="KEGG" id="bha:BH3825"/>
<dbReference type="eggNOG" id="COG3253">
    <property type="taxonomic scope" value="Bacteria"/>
</dbReference>
<dbReference type="HOGENOM" id="CLU_063226_1_0_9"/>
<dbReference type="OrthoDB" id="9773646at2"/>
<dbReference type="UniPathway" id="UPA00252"/>
<dbReference type="Proteomes" id="UP000001258">
    <property type="component" value="Chromosome"/>
</dbReference>
<dbReference type="GO" id="GO:0020037">
    <property type="term" value="F:heme binding"/>
    <property type="evidence" value="ECO:0007669"/>
    <property type="project" value="InterPro"/>
</dbReference>
<dbReference type="GO" id="GO:0046872">
    <property type="term" value="F:metal ion binding"/>
    <property type="evidence" value="ECO:0007669"/>
    <property type="project" value="UniProtKB-KW"/>
</dbReference>
<dbReference type="GO" id="GO:0016634">
    <property type="term" value="F:oxidoreductase activity, acting on the CH-CH group of donors, oxygen as acceptor"/>
    <property type="evidence" value="ECO:0007669"/>
    <property type="project" value="UniProtKB-UniRule"/>
</dbReference>
<dbReference type="GO" id="GO:0004601">
    <property type="term" value="F:peroxidase activity"/>
    <property type="evidence" value="ECO:0007669"/>
    <property type="project" value="InterPro"/>
</dbReference>
<dbReference type="GO" id="GO:0006785">
    <property type="term" value="P:heme B biosynthetic process"/>
    <property type="evidence" value="ECO:0007669"/>
    <property type="project" value="UniProtKB-UniRule"/>
</dbReference>
<dbReference type="Gene3D" id="3.30.70.1030">
    <property type="entry name" value="Apc35880, domain 1"/>
    <property type="match status" value="2"/>
</dbReference>
<dbReference type="HAMAP" id="MF_01442">
    <property type="entry name" value="Coproheme_decarbox_1"/>
    <property type="match status" value="1"/>
</dbReference>
<dbReference type="InterPro" id="IPR031332">
    <property type="entry name" value="CHDC"/>
</dbReference>
<dbReference type="InterPro" id="IPR010644">
    <property type="entry name" value="ChdC/CLD"/>
</dbReference>
<dbReference type="InterPro" id="IPR011008">
    <property type="entry name" value="Dimeric_a/b-barrel"/>
</dbReference>
<dbReference type="NCBIfam" id="NF008913">
    <property type="entry name" value="PRK12276.1"/>
    <property type="match status" value="1"/>
</dbReference>
<dbReference type="PANTHER" id="PTHR36843:SF1">
    <property type="entry name" value="COPROHEME DECARBOXYLASE"/>
    <property type="match status" value="1"/>
</dbReference>
<dbReference type="PANTHER" id="PTHR36843">
    <property type="entry name" value="HEME-DEPENDENT PEROXIDASE YWFI-RELATED"/>
    <property type="match status" value="1"/>
</dbReference>
<dbReference type="Pfam" id="PF06778">
    <property type="entry name" value="Chlor_dismutase"/>
    <property type="match status" value="1"/>
</dbReference>
<dbReference type="SUPFAM" id="SSF54909">
    <property type="entry name" value="Dimeric alpha+beta barrel"/>
    <property type="match status" value="1"/>
</dbReference>